<protein>
    <recommendedName>
        <fullName evidence="1">SsrA-binding protein</fullName>
    </recommendedName>
    <alternativeName>
        <fullName evidence="1">Small protein B</fullName>
    </alternativeName>
</protein>
<comment type="function">
    <text evidence="1">Required for rescue of stalled ribosomes mediated by trans-translation. Binds to transfer-messenger RNA (tmRNA), required for stable association of tmRNA with ribosomes. tmRNA and SmpB together mimic tRNA shape, replacing the anticodon stem-loop with SmpB. tmRNA is encoded by the ssrA gene; the 2 termini fold to resemble tRNA(Ala) and it encodes a 'tag peptide', a short internal open reading frame. During trans-translation Ala-aminoacylated tmRNA acts like a tRNA, entering the A-site of stalled ribosomes, displacing the stalled mRNA. The ribosome then switches to translate the ORF on the tmRNA; the nascent peptide is terminated with the 'tag peptide' encoded by the tmRNA and targeted for degradation. The ribosome is freed to recommence translation, which seems to be the essential function of trans-translation.</text>
</comment>
<comment type="subcellular location">
    <subcellularLocation>
        <location evidence="1">Cytoplasm</location>
    </subcellularLocation>
    <text evidence="1">The tmRNA-SmpB complex associates with stalled 70S ribosomes.</text>
</comment>
<comment type="similarity">
    <text evidence="1">Belongs to the SmpB family.</text>
</comment>
<organism>
    <name type="scientific">Neisseria meningitidis serogroup C (strain 053442)</name>
    <dbReference type="NCBI Taxonomy" id="374833"/>
    <lineage>
        <taxon>Bacteria</taxon>
        <taxon>Pseudomonadati</taxon>
        <taxon>Pseudomonadota</taxon>
        <taxon>Betaproteobacteria</taxon>
        <taxon>Neisseriales</taxon>
        <taxon>Neisseriaceae</taxon>
        <taxon>Neisseria</taxon>
    </lineage>
</organism>
<name>SSRP_NEIM0</name>
<evidence type="ECO:0000255" key="1">
    <source>
        <dbReference type="HAMAP-Rule" id="MF_00023"/>
    </source>
</evidence>
<evidence type="ECO:0000256" key="2">
    <source>
        <dbReference type="SAM" id="MobiDB-lite"/>
    </source>
</evidence>
<keyword id="KW-0963">Cytoplasm</keyword>
<keyword id="KW-0694">RNA-binding</keyword>
<accession>A9M0W1</accession>
<dbReference type="EMBL" id="CP000381">
    <property type="protein sequence ID" value="ABX73599.1"/>
    <property type="molecule type" value="Genomic_DNA"/>
</dbReference>
<dbReference type="RefSeq" id="WP_002229688.1">
    <property type="nucleotide sequence ID" value="NC_010120.1"/>
</dbReference>
<dbReference type="SMR" id="A9M0W1"/>
<dbReference type="GeneID" id="93387853"/>
<dbReference type="KEGG" id="nmn:NMCC_1432"/>
<dbReference type="HOGENOM" id="CLU_108953_3_0_4"/>
<dbReference type="Proteomes" id="UP000001177">
    <property type="component" value="Chromosome"/>
</dbReference>
<dbReference type="GO" id="GO:0005829">
    <property type="term" value="C:cytosol"/>
    <property type="evidence" value="ECO:0007669"/>
    <property type="project" value="TreeGrafter"/>
</dbReference>
<dbReference type="GO" id="GO:0003723">
    <property type="term" value="F:RNA binding"/>
    <property type="evidence" value="ECO:0007669"/>
    <property type="project" value="UniProtKB-UniRule"/>
</dbReference>
<dbReference type="GO" id="GO:0070929">
    <property type="term" value="P:trans-translation"/>
    <property type="evidence" value="ECO:0007669"/>
    <property type="project" value="UniProtKB-UniRule"/>
</dbReference>
<dbReference type="CDD" id="cd09294">
    <property type="entry name" value="SmpB"/>
    <property type="match status" value="1"/>
</dbReference>
<dbReference type="Gene3D" id="2.40.280.10">
    <property type="match status" value="1"/>
</dbReference>
<dbReference type="HAMAP" id="MF_00023">
    <property type="entry name" value="SmpB"/>
    <property type="match status" value="1"/>
</dbReference>
<dbReference type="InterPro" id="IPR023620">
    <property type="entry name" value="SmpB"/>
</dbReference>
<dbReference type="InterPro" id="IPR000037">
    <property type="entry name" value="SsrA-bd_prot"/>
</dbReference>
<dbReference type="InterPro" id="IPR020081">
    <property type="entry name" value="SsrA-bd_prot_CS"/>
</dbReference>
<dbReference type="NCBIfam" id="NF003843">
    <property type="entry name" value="PRK05422.1"/>
    <property type="match status" value="1"/>
</dbReference>
<dbReference type="NCBIfam" id="TIGR00086">
    <property type="entry name" value="smpB"/>
    <property type="match status" value="1"/>
</dbReference>
<dbReference type="PANTHER" id="PTHR30308:SF2">
    <property type="entry name" value="SSRA-BINDING PROTEIN"/>
    <property type="match status" value="1"/>
</dbReference>
<dbReference type="PANTHER" id="PTHR30308">
    <property type="entry name" value="TMRNA-BINDING COMPONENT OF TRANS-TRANSLATION TAGGING COMPLEX"/>
    <property type="match status" value="1"/>
</dbReference>
<dbReference type="Pfam" id="PF01668">
    <property type="entry name" value="SmpB"/>
    <property type="match status" value="1"/>
</dbReference>
<dbReference type="SUPFAM" id="SSF74982">
    <property type="entry name" value="Small protein B (SmpB)"/>
    <property type="match status" value="1"/>
</dbReference>
<dbReference type="PROSITE" id="PS01317">
    <property type="entry name" value="SSRP"/>
    <property type="match status" value="1"/>
</dbReference>
<gene>
    <name evidence="1" type="primary">smpB</name>
    <name type="ordered locus">NMCC_1432</name>
</gene>
<reference key="1">
    <citation type="journal article" date="2008" name="Genomics">
        <title>Characterization of ST-4821 complex, a unique Neisseria meningitidis clone.</title>
        <authorList>
            <person name="Peng J."/>
            <person name="Yang L."/>
            <person name="Yang F."/>
            <person name="Yang J."/>
            <person name="Yan Y."/>
            <person name="Nie H."/>
            <person name="Zhang X."/>
            <person name="Xiong Z."/>
            <person name="Jiang Y."/>
            <person name="Cheng F."/>
            <person name="Xu X."/>
            <person name="Chen S."/>
            <person name="Sun L."/>
            <person name="Li W."/>
            <person name="Shen Y."/>
            <person name="Shao Z."/>
            <person name="Liang X."/>
            <person name="Xu J."/>
            <person name="Jin Q."/>
        </authorList>
    </citation>
    <scope>NUCLEOTIDE SEQUENCE [LARGE SCALE GENOMIC DNA]</scope>
    <source>
        <strain>053442</strain>
    </source>
</reference>
<sequence>MAIANNKKAFHDFFIEDRIEAGLVLEGWEVKAIRAARVQLKESYIYWKKDAFYLVGCHITALPTASTHIKPDAVRPRKLLLNQSEINKLIGKTERAGYTIVPLDLHFSRGKIKMEIGLAKGKKQHDKRQSMKEADWKREKQRLIKHTR</sequence>
<proteinExistence type="inferred from homology"/>
<feature type="chain" id="PRO_1000074359" description="SsrA-binding protein">
    <location>
        <begin position="1"/>
        <end position="148"/>
    </location>
</feature>
<feature type="region of interest" description="Disordered" evidence="2">
    <location>
        <begin position="119"/>
        <end position="148"/>
    </location>
</feature>
<feature type="compositionally biased region" description="Basic and acidic residues" evidence="2">
    <location>
        <begin position="127"/>
        <end position="142"/>
    </location>
</feature>